<sequence>MNIILKISGKFFDEDNVNNLIVLRESIRELTDNGFRVGIVTGGGSTARRYIKLAREIGIGEAYLDLLGIWASRLNAYLVMFSLQDLAYMHVPQSLEEFIQDWSHGKVVVTGGFQPGQSTAAVAALVAEASSSKTLVVATNVDGVYEKDPRVYTDVKLIPHLTTQDLRKILEGSQSVQAGTYELLDPLAIKIVERSKIRVVVMNYRKLNRIINILKGEEVSSIIEPT</sequence>
<gene>
    <name evidence="1" type="primary">pyrH</name>
    <name type="ordered locus">M1425_1247</name>
</gene>
<protein>
    <recommendedName>
        <fullName evidence="1">Uridylate kinase</fullName>
        <shortName evidence="1">UK</shortName>
        <ecNumber evidence="1">2.7.4.22</ecNumber>
    </recommendedName>
    <alternativeName>
        <fullName evidence="1">Uridine monophosphate kinase</fullName>
        <shortName evidence="1">UMP kinase</shortName>
        <shortName evidence="1">UMPK</shortName>
    </alternativeName>
</protein>
<accession>C3MYM3</accession>
<name>PYRH_SACI4</name>
<evidence type="ECO:0000255" key="1">
    <source>
        <dbReference type="HAMAP-Rule" id="MF_01220"/>
    </source>
</evidence>
<keyword id="KW-0067">ATP-binding</keyword>
<keyword id="KW-0963">Cytoplasm</keyword>
<keyword id="KW-0418">Kinase</keyword>
<keyword id="KW-0547">Nucleotide-binding</keyword>
<keyword id="KW-0665">Pyrimidine biosynthesis</keyword>
<keyword id="KW-0808">Transferase</keyword>
<proteinExistence type="inferred from homology"/>
<organism>
    <name type="scientific">Saccharolobus islandicus (strain M.14.25 / Kamchatka #1)</name>
    <name type="common">Sulfolobus islandicus</name>
    <dbReference type="NCBI Taxonomy" id="427317"/>
    <lineage>
        <taxon>Archaea</taxon>
        <taxon>Thermoproteota</taxon>
        <taxon>Thermoprotei</taxon>
        <taxon>Sulfolobales</taxon>
        <taxon>Sulfolobaceae</taxon>
        <taxon>Saccharolobus</taxon>
    </lineage>
</organism>
<dbReference type="EC" id="2.7.4.22" evidence="1"/>
<dbReference type="EMBL" id="CP001400">
    <property type="protein sequence ID" value="ACP38002.1"/>
    <property type="molecule type" value="Genomic_DNA"/>
</dbReference>
<dbReference type="RefSeq" id="WP_012711255.1">
    <property type="nucleotide sequence ID" value="NC_012588.1"/>
</dbReference>
<dbReference type="SMR" id="C3MYM3"/>
<dbReference type="GeneID" id="84061562"/>
<dbReference type="KEGG" id="sia:M1425_1247"/>
<dbReference type="HOGENOM" id="CLU_079546_0_0_2"/>
<dbReference type="UniPathway" id="UPA00159">
    <property type="reaction ID" value="UER00275"/>
</dbReference>
<dbReference type="Proteomes" id="UP000001350">
    <property type="component" value="Chromosome"/>
</dbReference>
<dbReference type="GO" id="GO:0005737">
    <property type="term" value="C:cytoplasm"/>
    <property type="evidence" value="ECO:0007669"/>
    <property type="project" value="UniProtKB-SubCell"/>
</dbReference>
<dbReference type="GO" id="GO:0005524">
    <property type="term" value="F:ATP binding"/>
    <property type="evidence" value="ECO:0007669"/>
    <property type="project" value="UniProtKB-KW"/>
</dbReference>
<dbReference type="GO" id="GO:0033862">
    <property type="term" value="F:UMP kinase activity"/>
    <property type="evidence" value="ECO:0007669"/>
    <property type="project" value="UniProtKB-EC"/>
</dbReference>
<dbReference type="GO" id="GO:0044210">
    <property type="term" value="P:'de novo' CTP biosynthetic process"/>
    <property type="evidence" value="ECO:0007669"/>
    <property type="project" value="UniProtKB-UniRule"/>
</dbReference>
<dbReference type="GO" id="GO:0006225">
    <property type="term" value="P:UDP biosynthetic process"/>
    <property type="evidence" value="ECO:0007669"/>
    <property type="project" value="TreeGrafter"/>
</dbReference>
<dbReference type="CDD" id="cd04253">
    <property type="entry name" value="AAK_UMPK-PyrH-Pf"/>
    <property type="match status" value="1"/>
</dbReference>
<dbReference type="FunFam" id="3.40.1160.10:FF:000030">
    <property type="entry name" value="Uridylate kinase"/>
    <property type="match status" value="1"/>
</dbReference>
<dbReference type="Gene3D" id="3.40.1160.10">
    <property type="entry name" value="Acetylglutamate kinase-like"/>
    <property type="match status" value="1"/>
</dbReference>
<dbReference type="HAMAP" id="MF_01220_A">
    <property type="entry name" value="PyrH_A"/>
    <property type="match status" value="1"/>
</dbReference>
<dbReference type="InterPro" id="IPR036393">
    <property type="entry name" value="AceGlu_kinase-like_sf"/>
</dbReference>
<dbReference type="InterPro" id="IPR001048">
    <property type="entry name" value="Asp/Glu/Uridylate_kinase"/>
</dbReference>
<dbReference type="InterPro" id="IPR011817">
    <property type="entry name" value="Uridylate_kinase"/>
</dbReference>
<dbReference type="InterPro" id="IPR011818">
    <property type="entry name" value="Uridylate_kinase_arch/spir"/>
</dbReference>
<dbReference type="NCBIfam" id="TIGR02076">
    <property type="entry name" value="pyrH_arch"/>
    <property type="match status" value="1"/>
</dbReference>
<dbReference type="PANTHER" id="PTHR42833">
    <property type="entry name" value="URIDYLATE KINASE"/>
    <property type="match status" value="1"/>
</dbReference>
<dbReference type="PANTHER" id="PTHR42833:SF4">
    <property type="entry name" value="URIDYLATE KINASE PUMPKIN, CHLOROPLASTIC"/>
    <property type="match status" value="1"/>
</dbReference>
<dbReference type="Pfam" id="PF00696">
    <property type="entry name" value="AA_kinase"/>
    <property type="match status" value="1"/>
</dbReference>
<dbReference type="PIRSF" id="PIRSF005650">
    <property type="entry name" value="Uridylate_kin"/>
    <property type="match status" value="1"/>
</dbReference>
<dbReference type="SUPFAM" id="SSF53633">
    <property type="entry name" value="Carbamate kinase-like"/>
    <property type="match status" value="1"/>
</dbReference>
<reference key="1">
    <citation type="journal article" date="2009" name="Proc. Natl. Acad. Sci. U.S.A.">
        <title>Biogeography of the Sulfolobus islandicus pan-genome.</title>
        <authorList>
            <person name="Reno M.L."/>
            <person name="Held N.L."/>
            <person name="Fields C.J."/>
            <person name="Burke P.V."/>
            <person name="Whitaker R.J."/>
        </authorList>
    </citation>
    <scope>NUCLEOTIDE SEQUENCE [LARGE SCALE GENOMIC DNA]</scope>
    <source>
        <strain>M.14.25 / Kamchatka #1</strain>
    </source>
</reference>
<comment type="function">
    <text evidence="1">Catalyzes the reversible phosphorylation of UMP to UDP.</text>
</comment>
<comment type="catalytic activity">
    <reaction evidence="1">
        <text>UMP + ATP = UDP + ADP</text>
        <dbReference type="Rhea" id="RHEA:24400"/>
        <dbReference type="ChEBI" id="CHEBI:30616"/>
        <dbReference type="ChEBI" id="CHEBI:57865"/>
        <dbReference type="ChEBI" id="CHEBI:58223"/>
        <dbReference type="ChEBI" id="CHEBI:456216"/>
        <dbReference type="EC" id="2.7.4.22"/>
    </reaction>
</comment>
<comment type="activity regulation">
    <text evidence="1">Inhibited by UTP.</text>
</comment>
<comment type="pathway">
    <text evidence="1">Pyrimidine metabolism; CTP biosynthesis via de novo pathway; UDP from UMP (UMPK route): step 1/1.</text>
</comment>
<comment type="subunit">
    <text evidence="1">Homohexamer.</text>
</comment>
<comment type="subcellular location">
    <subcellularLocation>
        <location evidence="1">Cytoplasm</location>
    </subcellularLocation>
</comment>
<comment type="similarity">
    <text evidence="1">Belongs to the UMP kinase family.</text>
</comment>
<feature type="chain" id="PRO_1000213957" description="Uridylate kinase">
    <location>
        <begin position="1"/>
        <end position="226"/>
    </location>
</feature>
<feature type="binding site" evidence="1">
    <location>
        <begin position="6"/>
        <end position="10"/>
    </location>
    <ligand>
        <name>ATP</name>
        <dbReference type="ChEBI" id="CHEBI:30616"/>
    </ligand>
</feature>
<feature type="binding site" evidence="1">
    <location>
        <position position="43"/>
    </location>
    <ligand>
        <name>UMP</name>
        <dbReference type="ChEBI" id="CHEBI:57865"/>
    </ligand>
</feature>
<feature type="binding site" evidence="1">
    <location>
        <position position="44"/>
    </location>
    <ligand>
        <name>ATP</name>
        <dbReference type="ChEBI" id="CHEBI:30616"/>
    </ligand>
</feature>
<feature type="binding site" evidence="1">
    <location>
        <position position="48"/>
    </location>
    <ligand>
        <name>ATP</name>
        <dbReference type="ChEBI" id="CHEBI:30616"/>
    </ligand>
</feature>
<feature type="binding site" evidence="1">
    <location>
        <position position="65"/>
    </location>
    <ligand>
        <name>UMP</name>
        <dbReference type="ChEBI" id="CHEBI:57865"/>
    </ligand>
</feature>
<feature type="binding site" evidence="1">
    <location>
        <begin position="113"/>
        <end position="119"/>
    </location>
    <ligand>
        <name>UMP</name>
        <dbReference type="ChEBI" id="CHEBI:57865"/>
    </ligand>
</feature>
<feature type="binding site" evidence="1">
    <location>
        <position position="139"/>
    </location>
    <ligand>
        <name>ATP</name>
        <dbReference type="ChEBI" id="CHEBI:30616"/>
    </ligand>
</feature>
<feature type="binding site" evidence="1">
    <location>
        <position position="140"/>
    </location>
    <ligand>
        <name>ATP</name>
        <dbReference type="ChEBI" id="CHEBI:30616"/>
    </ligand>
</feature>
<feature type="binding site" evidence="1">
    <location>
        <position position="145"/>
    </location>
    <ligand>
        <name>ATP</name>
        <dbReference type="ChEBI" id="CHEBI:30616"/>
    </ligand>
</feature>
<feature type="binding site" evidence="1">
    <location>
        <position position="148"/>
    </location>
    <ligand>
        <name>ATP</name>
        <dbReference type="ChEBI" id="CHEBI:30616"/>
    </ligand>
</feature>